<protein>
    <recommendedName>
        <fullName evidence="1">Large ribosomal subunit protein uL1</fullName>
    </recommendedName>
    <alternativeName>
        <fullName evidence="2">50S ribosomal protein L1</fullName>
    </alternativeName>
</protein>
<dbReference type="EMBL" id="CP001638">
    <property type="protein sequence ID" value="ACS23039.1"/>
    <property type="molecule type" value="Genomic_DNA"/>
</dbReference>
<dbReference type="SMR" id="C5D3Q5"/>
<dbReference type="STRING" id="471223.GWCH70_0099"/>
<dbReference type="KEGG" id="gwc:GWCH70_0099"/>
<dbReference type="eggNOG" id="COG0081">
    <property type="taxonomic scope" value="Bacteria"/>
</dbReference>
<dbReference type="HOGENOM" id="CLU_062853_0_0_9"/>
<dbReference type="OrthoDB" id="9803740at2"/>
<dbReference type="GO" id="GO:0015934">
    <property type="term" value="C:large ribosomal subunit"/>
    <property type="evidence" value="ECO:0007669"/>
    <property type="project" value="InterPro"/>
</dbReference>
<dbReference type="GO" id="GO:0019843">
    <property type="term" value="F:rRNA binding"/>
    <property type="evidence" value="ECO:0007669"/>
    <property type="project" value="UniProtKB-UniRule"/>
</dbReference>
<dbReference type="GO" id="GO:0003735">
    <property type="term" value="F:structural constituent of ribosome"/>
    <property type="evidence" value="ECO:0007669"/>
    <property type="project" value="InterPro"/>
</dbReference>
<dbReference type="GO" id="GO:0000049">
    <property type="term" value="F:tRNA binding"/>
    <property type="evidence" value="ECO:0007669"/>
    <property type="project" value="UniProtKB-KW"/>
</dbReference>
<dbReference type="GO" id="GO:0006417">
    <property type="term" value="P:regulation of translation"/>
    <property type="evidence" value="ECO:0007669"/>
    <property type="project" value="UniProtKB-KW"/>
</dbReference>
<dbReference type="GO" id="GO:0006412">
    <property type="term" value="P:translation"/>
    <property type="evidence" value="ECO:0007669"/>
    <property type="project" value="UniProtKB-UniRule"/>
</dbReference>
<dbReference type="CDD" id="cd00403">
    <property type="entry name" value="Ribosomal_L1"/>
    <property type="match status" value="1"/>
</dbReference>
<dbReference type="FunFam" id="3.40.50.790:FF:000001">
    <property type="entry name" value="50S ribosomal protein L1"/>
    <property type="match status" value="1"/>
</dbReference>
<dbReference type="Gene3D" id="3.30.190.20">
    <property type="match status" value="1"/>
</dbReference>
<dbReference type="Gene3D" id="3.40.50.790">
    <property type="match status" value="1"/>
</dbReference>
<dbReference type="HAMAP" id="MF_01318_B">
    <property type="entry name" value="Ribosomal_uL1_B"/>
    <property type="match status" value="1"/>
</dbReference>
<dbReference type="InterPro" id="IPR005878">
    <property type="entry name" value="Ribosom_uL1_bac-type"/>
</dbReference>
<dbReference type="InterPro" id="IPR002143">
    <property type="entry name" value="Ribosomal_uL1"/>
</dbReference>
<dbReference type="InterPro" id="IPR023674">
    <property type="entry name" value="Ribosomal_uL1-like"/>
</dbReference>
<dbReference type="InterPro" id="IPR028364">
    <property type="entry name" value="Ribosomal_uL1/biogenesis"/>
</dbReference>
<dbReference type="InterPro" id="IPR016095">
    <property type="entry name" value="Ribosomal_uL1_3-a/b-sand"/>
</dbReference>
<dbReference type="InterPro" id="IPR023673">
    <property type="entry name" value="Ribosomal_uL1_CS"/>
</dbReference>
<dbReference type="NCBIfam" id="TIGR01169">
    <property type="entry name" value="rplA_bact"/>
    <property type="match status" value="1"/>
</dbReference>
<dbReference type="PANTHER" id="PTHR36427">
    <property type="entry name" value="54S RIBOSOMAL PROTEIN L1, MITOCHONDRIAL"/>
    <property type="match status" value="1"/>
</dbReference>
<dbReference type="PANTHER" id="PTHR36427:SF3">
    <property type="entry name" value="LARGE RIBOSOMAL SUBUNIT PROTEIN UL1M"/>
    <property type="match status" value="1"/>
</dbReference>
<dbReference type="Pfam" id="PF00687">
    <property type="entry name" value="Ribosomal_L1"/>
    <property type="match status" value="1"/>
</dbReference>
<dbReference type="PIRSF" id="PIRSF002155">
    <property type="entry name" value="Ribosomal_L1"/>
    <property type="match status" value="1"/>
</dbReference>
<dbReference type="SUPFAM" id="SSF56808">
    <property type="entry name" value="Ribosomal protein L1"/>
    <property type="match status" value="1"/>
</dbReference>
<dbReference type="PROSITE" id="PS01199">
    <property type="entry name" value="RIBOSOMAL_L1"/>
    <property type="match status" value="1"/>
</dbReference>
<organism>
    <name type="scientific">Geobacillus sp. (strain WCH70)</name>
    <dbReference type="NCBI Taxonomy" id="471223"/>
    <lineage>
        <taxon>Bacteria</taxon>
        <taxon>Bacillati</taxon>
        <taxon>Bacillota</taxon>
        <taxon>Bacilli</taxon>
        <taxon>Bacillales</taxon>
        <taxon>Anoxybacillaceae</taxon>
        <taxon>Geobacillus</taxon>
    </lineage>
</organism>
<proteinExistence type="inferred from homology"/>
<feature type="chain" id="PRO_1000214422" description="Large ribosomal subunit protein uL1">
    <location>
        <begin position="1"/>
        <end position="233"/>
    </location>
</feature>
<gene>
    <name evidence="1" type="primary">rplA</name>
    <name type="ordered locus">GWCH70_0099</name>
</gene>
<name>RL1_GEOSW</name>
<keyword id="KW-0678">Repressor</keyword>
<keyword id="KW-0687">Ribonucleoprotein</keyword>
<keyword id="KW-0689">Ribosomal protein</keyword>
<keyword id="KW-0694">RNA-binding</keyword>
<keyword id="KW-0699">rRNA-binding</keyword>
<keyword id="KW-0810">Translation regulation</keyword>
<keyword id="KW-0820">tRNA-binding</keyword>
<accession>C5D3Q5</accession>
<sequence length="233" mass="25119">MPKRGKKYLEAAKLVDRFKAYPIAEAIELVKKTNIAKFDATVEVAFRLGVDPKKADQQIRGAVVLPHGTGKVQRVLVFAKGEKAKEAEAAGADYVGDTEYINKIQQGWFDFDVVVATPDMMGEVGKLGRILGPKGLMPNPKTGTVTFDVAKAVQEIKAGKVEYRVDKAGNIHVPIGKVSFDNEKLAENFTTIYEAILKAKPAAAKGTYVKNVTITSTMGPGIKVDPSTVAVAQ</sequence>
<reference key="1">
    <citation type="submission" date="2009-06" db="EMBL/GenBank/DDBJ databases">
        <title>Complete sequence of chromosome of Geopacillus sp. WCH70.</title>
        <authorList>
            <consortium name="US DOE Joint Genome Institute"/>
            <person name="Lucas S."/>
            <person name="Copeland A."/>
            <person name="Lapidus A."/>
            <person name="Glavina del Rio T."/>
            <person name="Dalin E."/>
            <person name="Tice H."/>
            <person name="Bruce D."/>
            <person name="Goodwin L."/>
            <person name="Pitluck S."/>
            <person name="Chertkov O."/>
            <person name="Brettin T."/>
            <person name="Detter J.C."/>
            <person name="Han C."/>
            <person name="Larimer F."/>
            <person name="Land M."/>
            <person name="Hauser L."/>
            <person name="Kyrpides N."/>
            <person name="Mikhailova N."/>
            <person name="Brumm P."/>
            <person name="Mead D.A."/>
            <person name="Richardson P."/>
        </authorList>
    </citation>
    <scope>NUCLEOTIDE SEQUENCE [LARGE SCALE GENOMIC DNA]</scope>
    <source>
        <strain>WCH70</strain>
    </source>
</reference>
<comment type="function">
    <text evidence="1">Binds directly to 23S rRNA. The L1 stalk is quite mobile in the ribosome, and is involved in E site tRNA release.</text>
</comment>
<comment type="function">
    <text evidence="1">Protein L1 is also a translational repressor protein, it controls the translation of the L11 operon by binding to its mRNA.</text>
</comment>
<comment type="subunit">
    <text evidence="1">Part of the 50S ribosomal subunit.</text>
</comment>
<comment type="similarity">
    <text evidence="1">Belongs to the universal ribosomal protein uL1 family.</text>
</comment>
<evidence type="ECO:0000255" key="1">
    <source>
        <dbReference type="HAMAP-Rule" id="MF_01318"/>
    </source>
</evidence>
<evidence type="ECO:0000305" key="2"/>